<accession>P0A695</accession>
<accession>A0A1R3Y2N1</accession>
<accession>Q10813</accession>
<accession>X2BM47</accession>
<proteinExistence type="inferred from homology"/>
<organism>
    <name type="scientific">Mycobacterium bovis (strain ATCC BAA-935 / AF2122/97)</name>
    <dbReference type="NCBI Taxonomy" id="233413"/>
    <lineage>
        <taxon>Bacteria</taxon>
        <taxon>Bacillati</taxon>
        <taxon>Actinomycetota</taxon>
        <taxon>Actinomycetes</taxon>
        <taxon>Mycobacteriales</taxon>
        <taxon>Mycobacteriaceae</taxon>
        <taxon>Mycobacterium</taxon>
        <taxon>Mycobacterium tuberculosis complex</taxon>
    </lineage>
</organism>
<evidence type="ECO:0000255" key="1"/>
<evidence type="ECO:0000305" key="2"/>
<name>PPE45_MYCBO</name>
<reference key="1">
    <citation type="journal article" date="2003" name="Proc. Natl. Acad. Sci. U.S.A.">
        <title>The complete genome sequence of Mycobacterium bovis.</title>
        <authorList>
            <person name="Garnier T."/>
            <person name="Eiglmeier K."/>
            <person name="Camus J.-C."/>
            <person name="Medina N."/>
            <person name="Mansoor H."/>
            <person name="Pryor M."/>
            <person name="Duthoy S."/>
            <person name="Grondin S."/>
            <person name="Lacroix C."/>
            <person name="Monsempe C."/>
            <person name="Simon S."/>
            <person name="Harris B."/>
            <person name="Atkin R."/>
            <person name="Doggett J."/>
            <person name="Mayes R."/>
            <person name="Keating L."/>
            <person name="Wheeler P.R."/>
            <person name="Parkhill J."/>
            <person name="Barrell B.G."/>
            <person name="Cole S.T."/>
            <person name="Gordon S.V."/>
            <person name="Hewinson R.G."/>
        </authorList>
    </citation>
    <scope>NUCLEOTIDE SEQUENCE [LARGE SCALE GENOMIC DNA]</scope>
    <source>
        <strain>ATCC BAA-935 / AF2122/97</strain>
    </source>
</reference>
<reference key="2">
    <citation type="journal article" date="2017" name="Genome Announc.">
        <title>Updated reference genome sequence and annotation of Mycobacterium bovis AF2122/97.</title>
        <authorList>
            <person name="Malone K.M."/>
            <person name="Farrell D."/>
            <person name="Stuber T.P."/>
            <person name="Schubert O.T."/>
            <person name="Aebersold R."/>
            <person name="Robbe-Austerman S."/>
            <person name="Gordon S.V."/>
        </authorList>
    </citation>
    <scope>NUCLEOTIDE SEQUENCE [LARGE SCALE GENOMIC DNA]</scope>
    <scope>GENOME REANNOTATION</scope>
    <source>
        <strain>ATCC BAA-935 / AF2122/97</strain>
    </source>
</reference>
<keyword id="KW-1003">Cell membrane</keyword>
<keyword id="KW-0472">Membrane</keyword>
<keyword id="KW-1185">Reference proteome</keyword>
<keyword id="KW-0812">Transmembrane</keyword>
<keyword id="KW-1133">Transmembrane helix</keyword>
<feature type="chain" id="PRO_0000217849" description="Uncharacterized PPE family protein PPE45">
    <location>
        <begin position="1"/>
        <end position="408"/>
    </location>
</feature>
<feature type="transmembrane region" description="Helical" evidence="1">
    <location>
        <begin position="56"/>
        <end position="76"/>
    </location>
</feature>
<comment type="subcellular location">
    <subcellularLocation>
        <location evidence="2">Cell membrane</location>
        <topology evidence="2">Single-pass membrane protein</topology>
    </subcellularLocation>
</comment>
<comment type="similarity">
    <text evidence="2">Belongs to the mycobacterial PPE family.</text>
</comment>
<protein>
    <recommendedName>
        <fullName>Uncharacterized PPE family protein PPE45</fullName>
    </recommendedName>
</protein>
<sequence>MDFGVLPPEINSGRMYAGPGSGPMMAAAAAWDSLAAELGLAAGGYRLAISELTGAYWAGPAAASMVAAVTPYVAWLSATAGQAEQAGMQARAAAAAYELAFAMTVPPPVVVANRALLVALVATNFFGQNTPAIAATEAQYAEMWAQDAAAMYAYAGSAAIATELTPFTAAPVTTSPAALAGQAAATVSSTVPPLATTAAVPQLLQQLSSTSLIPWYSALQQWLAENLLGLTPDNRMTIVRLLGISYFDEGLLQFEASLAQQAIPGTPGGAGDSGSSVLDSWGPTIFAGPRASPSVAGGGAVGGVQTPQPYWYWALDRESIGGSVSAALGKGSSAGSLSVPPDWAARARWANPAAWRLPGDDVTALRGTAENALLRGFPMASAGQSTGGGFVHKYGFRLAVMQRPPFAG</sequence>
<dbReference type="EMBL" id="LT708304">
    <property type="protein sequence ID" value="SIU01537.1"/>
    <property type="molecule type" value="Genomic_DNA"/>
</dbReference>
<dbReference type="RefSeq" id="NP_856561.1">
    <property type="nucleotide sequence ID" value="NC_002945.3"/>
</dbReference>
<dbReference type="RefSeq" id="WP_003414680.1">
    <property type="nucleotide sequence ID" value="NC_002945.4"/>
</dbReference>
<dbReference type="SMR" id="P0A695"/>
<dbReference type="KEGG" id="mbo:BQ2027_MB2916C"/>
<dbReference type="PATRIC" id="fig|233413.5.peg.3200"/>
<dbReference type="Proteomes" id="UP000001419">
    <property type="component" value="Chromosome"/>
</dbReference>
<dbReference type="GO" id="GO:0005886">
    <property type="term" value="C:plasma membrane"/>
    <property type="evidence" value="ECO:0007669"/>
    <property type="project" value="UniProtKB-SubCell"/>
</dbReference>
<dbReference type="GO" id="GO:0052572">
    <property type="term" value="P:response to host immune response"/>
    <property type="evidence" value="ECO:0007669"/>
    <property type="project" value="TreeGrafter"/>
</dbReference>
<dbReference type="FunFam" id="1.20.1260.20:FF:000001">
    <property type="entry name" value="PPE family protein PPE41"/>
    <property type="match status" value="1"/>
</dbReference>
<dbReference type="Gene3D" id="1.20.1260.20">
    <property type="entry name" value="PPE superfamily"/>
    <property type="match status" value="1"/>
</dbReference>
<dbReference type="InterPro" id="IPR022171">
    <property type="entry name" value="PPE_C"/>
</dbReference>
<dbReference type="InterPro" id="IPR000030">
    <property type="entry name" value="PPE_dom"/>
</dbReference>
<dbReference type="InterPro" id="IPR038332">
    <property type="entry name" value="PPE_sf"/>
</dbReference>
<dbReference type="PANTHER" id="PTHR46766">
    <property type="entry name" value="GLUTAMINE-RICH PROTEIN 2"/>
    <property type="match status" value="1"/>
</dbReference>
<dbReference type="PANTHER" id="PTHR46766:SF1">
    <property type="entry name" value="GLUTAMINE-RICH PROTEIN 2"/>
    <property type="match status" value="1"/>
</dbReference>
<dbReference type="Pfam" id="PF00823">
    <property type="entry name" value="PPE"/>
    <property type="match status" value="1"/>
</dbReference>
<dbReference type="Pfam" id="PF12484">
    <property type="entry name" value="PPE-SVP"/>
    <property type="match status" value="1"/>
</dbReference>
<dbReference type="SUPFAM" id="SSF140459">
    <property type="entry name" value="PE/PPE dimer-like"/>
    <property type="match status" value="1"/>
</dbReference>
<gene>
    <name type="primary">PPE45</name>
    <name type="ordered locus">BQ2027_MB2916C</name>
</gene>